<keyword id="KW-0106">Calcium</keyword>
<keyword id="KW-0903">Direct protein sequencing</keyword>
<keyword id="KW-1015">Disulfide bond</keyword>
<keyword id="KW-0325">Glycoprotein</keyword>
<keyword id="KW-0378">Hydrolase</keyword>
<keyword id="KW-0479">Metal-binding</keyword>
<keyword id="KW-0597">Phosphoprotein</keyword>
<keyword id="KW-1185">Reference proteome</keyword>
<keyword id="KW-0964">Secreted</keyword>
<keyword id="KW-0732">Signal</keyword>
<sequence length="354" mass="39507">MAKLLLLTLLGASLAFVGERLLAFRNSFGAVQELEPVEPQNCVLIEGLENGSEDIDILPSGLAFISSGLKYPGMPNFAPDEPGKIFLIDMNEKNPRAQELEISNGFEKESFNPHGISTFIDKDHTVYLYVVNHPHMKSTVEIFKFEEQQRSLVHLKTIKHELLKSVNNIVVLGPEQFYATRDHYFTNYVLALLEMFLDLHWTSVLFYSPKEVKVVAKGFSSANGITVSLDKKYVYVADATAKNVHVMEKHDNWDLTELKVIHLDTLVDNLSVDPATGDILAGCHPNGMKLLNYNPEDPPGSEVLRIQNVLSEKPRVSTVYTNDGSVLQGSTVASVYQGKILIGTIFHKTLYCVL</sequence>
<gene>
    <name type="primary">PON3</name>
</gene>
<feature type="initiator methionine" description="Removed" evidence="4">
    <location>
        <position position="1"/>
    </location>
</feature>
<feature type="chain" id="PRO_0000223293" description="Serum paraoxonase/lactonase 3">
    <location>
        <begin position="2"/>
        <end position="354"/>
    </location>
</feature>
<feature type="signal peptide" description="Not cleaved" evidence="3">
    <location>
        <begin position="2"/>
        <end status="unknown"/>
    </location>
</feature>
<feature type="active site" description="Proton acceptor" evidence="1">
    <location>
        <position position="114"/>
    </location>
</feature>
<feature type="binding site" evidence="1">
    <location>
        <position position="53"/>
    </location>
    <ligand>
        <name>Ca(2+)</name>
        <dbReference type="ChEBI" id="CHEBI:29108"/>
        <label>1</label>
        <note>catalytic</note>
    </ligand>
</feature>
<feature type="binding site" evidence="1">
    <location>
        <position position="54"/>
    </location>
    <ligand>
        <name>Ca(2+)</name>
        <dbReference type="ChEBI" id="CHEBI:29108"/>
        <label>2</label>
    </ligand>
</feature>
<feature type="binding site" evidence="1">
    <location>
        <position position="116"/>
    </location>
    <ligand>
        <name>Ca(2+)</name>
        <dbReference type="ChEBI" id="CHEBI:29108"/>
        <label>2</label>
    </ligand>
</feature>
<feature type="binding site" evidence="1">
    <location>
        <position position="167"/>
    </location>
    <ligand>
        <name>Ca(2+)</name>
        <dbReference type="ChEBI" id="CHEBI:29108"/>
        <label>1</label>
        <note>catalytic</note>
    </ligand>
</feature>
<feature type="binding site">
    <location>
        <position position="168"/>
    </location>
    <ligand>
        <name>Ca(2+)</name>
        <dbReference type="ChEBI" id="CHEBI:29108"/>
        <label>2</label>
    </ligand>
</feature>
<feature type="binding site" evidence="1">
    <location>
        <position position="223"/>
    </location>
    <ligand>
        <name>Ca(2+)</name>
        <dbReference type="ChEBI" id="CHEBI:29108"/>
        <label>1</label>
        <note>catalytic</note>
    </ligand>
</feature>
<feature type="binding site" evidence="1">
    <location>
        <position position="268"/>
    </location>
    <ligand>
        <name>Ca(2+)</name>
        <dbReference type="ChEBI" id="CHEBI:29108"/>
        <label>1</label>
        <note>catalytic</note>
    </ligand>
</feature>
<feature type="binding site" evidence="1">
    <location>
        <position position="269"/>
    </location>
    <ligand>
        <name>Ca(2+)</name>
        <dbReference type="ChEBI" id="CHEBI:29108"/>
        <label>1</label>
        <note>catalytic</note>
    </ligand>
</feature>
<feature type="modified residue" description="Phosphoserine" evidence="2">
    <location>
        <position position="165"/>
    </location>
</feature>
<feature type="glycosylation site" description="N-linked (GlcNAc...) asparagine" evidence="3">
    <location>
        <position position="50"/>
    </location>
</feature>
<feature type="glycosylation site" description="N-linked (GlcNAc...) asparagine" evidence="3">
    <location>
        <position position="269"/>
    </location>
</feature>
<feature type="disulfide bond" evidence="1">
    <location>
        <begin position="42"/>
        <end position="352"/>
    </location>
</feature>
<reference key="1">
    <citation type="journal article" date="2000" name="J. Biol. Chem.">
        <title>Rabbit serum paraoxonase 3 (PON3) is a high density lipoprotein-associated lactonase and protects low density lipoprotein against oxidation.</title>
        <authorList>
            <person name="Draganov D.I."/>
            <person name="Stetson P.L."/>
            <person name="Watson C.E."/>
            <person name="Billecke S.S."/>
            <person name="La Du B.N."/>
        </authorList>
    </citation>
    <scope>NUCLEOTIDE SEQUENCE [MRNA]</scope>
    <scope>PROTEIN SEQUENCE OF 2-20</scope>
    <scope>FUNCTION</scope>
    <source>
        <strain>New Zealand white</strain>
        <tissue>Serum</tissue>
    </source>
</reference>
<dbReference type="EC" id="3.1.1.2"/>
<dbReference type="EC" id="3.1.1.81"/>
<dbReference type="EC" id="3.1.8.1"/>
<dbReference type="EMBL" id="AF220944">
    <property type="protein sequence ID" value="AAK06401.1"/>
    <property type="molecule type" value="mRNA"/>
</dbReference>
<dbReference type="RefSeq" id="NP_001075547.1">
    <property type="nucleotide sequence ID" value="NM_001082078.2"/>
</dbReference>
<dbReference type="SMR" id="Q9BGN0"/>
<dbReference type="FunCoup" id="Q9BGN0">
    <property type="interactions" value="6"/>
</dbReference>
<dbReference type="GlyCosmos" id="Q9BGN0">
    <property type="glycosylation" value="2 sites, No reported glycans"/>
</dbReference>
<dbReference type="GeneID" id="100008754"/>
<dbReference type="KEGG" id="ocu:100008754"/>
<dbReference type="CTD" id="5446"/>
<dbReference type="InParanoid" id="Q9BGN0"/>
<dbReference type="OrthoDB" id="423498at2759"/>
<dbReference type="BRENDA" id="3.1.1.2">
    <property type="organism ID" value="1749"/>
</dbReference>
<dbReference type="BRENDA" id="3.1.1.25">
    <property type="organism ID" value="1749"/>
</dbReference>
<dbReference type="BRENDA" id="3.1.8.1">
    <property type="organism ID" value="1749"/>
</dbReference>
<dbReference type="Proteomes" id="UP000001811">
    <property type="component" value="Unplaced"/>
</dbReference>
<dbReference type="GO" id="GO:0005615">
    <property type="term" value="C:extracellular space"/>
    <property type="evidence" value="ECO:0007669"/>
    <property type="project" value="TreeGrafter"/>
</dbReference>
<dbReference type="GO" id="GO:0102007">
    <property type="term" value="F:acyl-L-homoserine-lactone lactonohydrolase activity"/>
    <property type="evidence" value="ECO:0007669"/>
    <property type="project" value="UniProtKB-EC"/>
</dbReference>
<dbReference type="GO" id="GO:0004063">
    <property type="term" value="F:aryldialkylphosphatase activity"/>
    <property type="evidence" value="ECO:0007669"/>
    <property type="project" value="UniProtKB-EC"/>
</dbReference>
<dbReference type="GO" id="GO:0004064">
    <property type="term" value="F:arylesterase activity"/>
    <property type="evidence" value="ECO:0007669"/>
    <property type="project" value="UniProtKB-EC"/>
</dbReference>
<dbReference type="GO" id="GO:0046872">
    <property type="term" value="F:metal ion binding"/>
    <property type="evidence" value="ECO:0007669"/>
    <property type="project" value="UniProtKB-KW"/>
</dbReference>
<dbReference type="GO" id="GO:0009636">
    <property type="term" value="P:response to toxic substance"/>
    <property type="evidence" value="ECO:0007669"/>
    <property type="project" value="TreeGrafter"/>
</dbReference>
<dbReference type="FunFam" id="2.120.10.30:FF:000023">
    <property type="entry name" value="Serum paraoxonase/arylesterase 2"/>
    <property type="match status" value="1"/>
</dbReference>
<dbReference type="Gene3D" id="2.120.10.30">
    <property type="entry name" value="TolB, C-terminal domain"/>
    <property type="match status" value="1"/>
</dbReference>
<dbReference type="InterPro" id="IPR011042">
    <property type="entry name" value="6-blade_b-propeller_TolB-like"/>
</dbReference>
<dbReference type="InterPro" id="IPR002640">
    <property type="entry name" value="Arylesterase"/>
</dbReference>
<dbReference type="InterPro" id="IPR008364">
    <property type="entry name" value="Paraoxonase2"/>
</dbReference>
<dbReference type="InterPro" id="IPR051288">
    <property type="entry name" value="Serum_paraoxonase/arylesterase"/>
</dbReference>
<dbReference type="PANTHER" id="PTHR11799">
    <property type="entry name" value="PARAOXONASE"/>
    <property type="match status" value="1"/>
</dbReference>
<dbReference type="PANTHER" id="PTHR11799:SF14">
    <property type="entry name" value="SERUM PARAOXONASE_LACTONASE 3"/>
    <property type="match status" value="1"/>
</dbReference>
<dbReference type="Pfam" id="PF01731">
    <property type="entry name" value="Arylesterase"/>
    <property type="match status" value="1"/>
</dbReference>
<dbReference type="PRINTS" id="PR01785">
    <property type="entry name" value="PARAOXONASE"/>
</dbReference>
<dbReference type="PRINTS" id="PR01787">
    <property type="entry name" value="PARAOXONASE2"/>
</dbReference>
<dbReference type="SUPFAM" id="SSF63829">
    <property type="entry name" value="Calcium-dependent phosphotriesterase"/>
    <property type="match status" value="1"/>
</dbReference>
<comment type="function">
    <text evidence="1 4">Has low activity towards the organophosphate paraxon and aromatic carboxylic acid esters (By similarity). Rapidly hydrolyzes lactones such as statin prodrugs (e.g. lovastatin). Hydrolyzes aromatic lactones and 5- or 6-member ring lactones with aliphatic substituents but not simple lactones or those with polar substituents.</text>
</comment>
<comment type="catalytic activity">
    <reaction>
        <text>a phenyl acetate + H2O = a phenol + acetate + H(+)</text>
        <dbReference type="Rhea" id="RHEA:17309"/>
        <dbReference type="ChEBI" id="CHEBI:15377"/>
        <dbReference type="ChEBI" id="CHEBI:15378"/>
        <dbReference type="ChEBI" id="CHEBI:30089"/>
        <dbReference type="ChEBI" id="CHEBI:33853"/>
        <dbReference type="ChEBI" id="CHEBI:140310"/>
        <dbReference type="EC" id="3.1.1.2"/>
    </reaction>
</comment>
<comment type="catalytic activity">
    <reaction>
        <text>An aryl dialkyl phosphate + H2O = dialkyl phosphate + an aryl alcohol.</text>
        <dbReference type="EC" id="3.1.8.1"/>
    </reaction>
</comment>
<comment type="catalytic activity">
    <reaction>
        <text>an N-acyl-L-homoserine lactone + H2O = an N-acyl-L-homoserine + H(+)</text>
        <dbReference type="Rhea" id="RHEA:22576"/>
        <dbReference type="ChEBI" id="CHEBI:15377"/>
        <dbReference type="ChEBI" id="CHEBI:15378"/>
        <dbReference type="ChEBI" id="CHEBI:55474"/>
        <dbReference type="ChEBI" id="CHEBI:58921"/>
        <dbReference type="EC" id="3.1.1.81"/>
    </reaction>
</comment>
<comment type="cofactor">
    <cofactor evidence="1">
        <name>Ca(2+)</name>
        <dbReference type="ChEBI" id="CHEBI:29108"/>
    </cofactor>
    <text evidence="1">Binds 2 calcium ions per subunit.</text>
</comment>
<comment type="subunit">
    <text evidence="1">Homodimer.</text>
</comment>
<comment type="subcellular location">
    <subcellularLocation>
        <location evidence="1">Secreted</location>
        <location evidence="1">Extracellular space</location>
    </subcellularLocation>
</comment>
<comment type="PTM">
    <text evidence="1">Glycosylated.</text>
</comment>
<comment type="PTM">
    <text evidence="1">The signal sequence is not cleaved.</text>
</comment>
<comment type="similarity">
    <text evidence="5">Belongs to the paraoxonase family.</text>
</comment>
<name>PON3_RABIT</name>
<evidence type="ECO:0000250" key="1"/>
<evidence type="ECO:0000250" key="2">
    <source>
        <dbReference type="UniProtKB" id="Q15166"/>
    </source>
</evidence>
<evidence type="ECO:0000255" key="3"/>
<evidence type="ECO:0000269" key="4">
    <source>
    </source>
</evidence>
<evidence type="ECO:0000305" key="5"/>
<protein>
    <recommendedName>
        <fullName>Serum paraoxonase/lactonase 3</fullName>
        <ecNumber>3.1.1.2</ecNumber>
        <ecNumber>3.1.1.81</ecNumber>
        <ecNumber>3.1.8.1</ecNumber>
    </recommendedName>
</protein>
<proteinExistence type="evidence at protein level"/>
<organism>
    <name type="scientific">Oryctolagus cuniculus</name>
    <name type="common">Rabbit</name>
    <dbReference type="NCBI Taxonomy" id="9986"/>
    <lineage>
        <taxon>Eukaryota</taxon>
        <taxon>Metazoa</taxon>
        <taxon>Chordata</taxon>
        <taxon>Craniata</taxon>
        <taxon>Vertebrata</taxon>
        <taxon>Euteleostomi</taxon>
        <taxon>Mammalia</taxon>
        <taxon>Eutheria</taxon>
        <taxon>Euarchontoglires</taxon>
        <taxon>Glires</taxon>
        <taxon>Lagomorpha</taxon>
        <taxon>Leporidae</taxon>
        <taxon>Oryctolagus</taxon>
    </lineage>
</organism>
<accession>Q9BGN0</accession>